<name>HDOX1_STAA3</name>
<reference key="1">
    <citation type="journal article" date="2006" name="Lancet">
        <title>Complete genome sequence of USA300, an epidemic clone of community-acquired meticillin-resistant Staphylococcus aureus.</title>
        <authorList>
            <person name="Diep B.A."/>
            <person name="Gill S.R."/>
            <person name="Chang R.F."/>
            <person name="Phan T.H."/>
            <person name="Chen J.H."/>
            <person name="Davidson M.G."/>
            <person name="Lin F."/>
            <person name="Lin J."/>
            <person name="Carleton H.A."/>
            <person name="Mongodin E.F."/>
            <person name="Sensabaugh G.F."/>
            <person name="Perdreau-Remington F."/>
        </authorList>
    </citation>
    <scope>NUCLEOTIDE SEQUENCE [LARGE SCALE GENOMIC DNA]</scope>
    <source>
        <strain>USA300</strain>
    </source>
</reference>
<comment type="function">
    <text evidence="1">Allows bacterial pathogens to use the host heme as an iron source. Catalyzes the oxidative degradation of the heme macrocyclic porphyrin ring to the oxo-bilirubin chromophore staphylobilin (a mixture of the linear tetrapyrroles 5-oxo-delta-bilirubin and 15-oxo-beta-bilirubin) in the presence of a suitable electron donor such as ascorbate or NADPH--cytochrome P450 reductase, with subsequent release of free iron.</text>
</comment>
<comment type="catalytic activity">
    <reaction evidence="1">
        <text>heme b + 5 AH2 + 4 O2 + 2 H(+) = delta-staphylobilin + Fe(2+) + formaldehyde + 5 A + 4 H2O</text>
        <dbReference type="Rhea" id="RHEA:37039"/>
        <dbReference type="ChEBI" id="CHEBI:13193"/>
        <dbReference type="ChEBI" id="CHEBI:15377"/>
        <dbReference type="ChEBI" id="CHEBI:15378"/>
        <dbReference type="ChEBI" id="CHEBI:15379"/>
        <dbReference type="ChEBI" id="CHEBI:16842"/>
        <dbReference type="ChEBI" id="CHEBI:17499"/>
        <dbReference type="ChEBI" id="CHEBI:29033"/>
        <dbReference type="ChEBI" id="CHEBI:60344"/>
        <dbReference type="ChEBI" id="CHEBI:74361"/>
        <dbReference type="EC" id="1.14.99.48"/>
    </reaction>
</comment>
<comment type="catalytic activity">
    <reaction evidence="1">
        <text>heme b + 5 AH2 + 4 O2 + 2 H(+) = beta-staphylobilin + Fe(2+) + formaldehyde + 5 A + 4 H2O</text>
        <dbReference type="Rhea" id="RHEA:37363"/>
        <dbReference type="ChEBI" id="CHEBI:13193"/>
        <dbReference type="ChEBI" id="CHEBI:15377"/>
        <dbReference type="ChEBI" id="CHEBI:15378"/>
        <dbReference type="ChEBI" id="CHEBI:15379"/>
        <dbReference type="ChEBI" id="CHEBI:16842"/>
        <dbReference type="ChEBI" id="CHEBI:17499"/>
        <dbReference type="ChEBI" id="CHEBI:29033"/>
        <dbReference type="ChEBI" id="CHEBI:60344"/>
        <dbReference type="ChEBI" id="CHEBI:74362"/>
        <dbReference type="EC" id="1.14.99.48"/>
    </reaction>
</comment>
<comment type="subunit">
    <text evidence="1">Homodimer.</text>
</comment>
<comment type="subcellular location">
    <subcellularLocation>
        <location evidence="1">Cytoplasm</location>
    </subcellularLocation>
</comment>
<comment type="similarity">
    <text evidence="1">Belongs to the antibiotic biosynthesis monooxygenase family. Heme-degrading monooxygenase IsdG subfamily.</text>
</comment>
<organism>
    <name type="scientific">Staphylococcus aureus (strain USA300)</name>
    <dbReference type="NCBI Taxonomy" id="367830"/>
    <lineage>
        <taxon>Bacteria</taxon>
        <taxon>Bacillati</taxon>
        <taxon>Bacillota</taxon>
        <taxon>Bacilli</taxon>
        <taxon>Bacillales</taxon>
        <taxon>Staphylococcaceae</taxon>
        <taxon>Staphylococcus</taxon>
    </lineage>
</organism>
<accession>Q2FHU5</accession>
<proteinExistence type="inferred from homology"/>
<keyword id="KW-0963">Cytoplasm</keyword>
<keyword id="KW-0349">Heme</keyword>
<keyword id="KW-0408">Iron</keyword>
<keyword id="KW-0479">Metal-binding</keyword>
<keyword id="KW-0503">Monooxygenase</keyword>
<keyword id="KW-0560">Oxidoreductase</keyword>
<dbReference type="EC" id="1.14.99.48" evidence="1"/>
<dbReference type="EMBL" id="CP000255">
    <property type="protein sequence ID" value="ABD22802.1"/>
    <property type="molecule type" value="Genomic_DNA"/>
</dbReference>
<dbReference type="RefSeq" id="WP_000670950.1">
    <property type="nucleotide sequence ID" value="NZ_CP027476.1"/>
</dbReference>
<dbReference type="SMR" id="Q2FHU5"/>
<dbReference type="KEGG" id="saa:SAUSA300_1035"/>
<dbReference type="HOGENOM" id="CLU_141544_2_1_9"/>
<dbReference type="OMA" id="VTIMTTW"/>
<dbReference type="Proteomes" id="UP000001939">
    <property type="component" value="Chromosome"/>
</dbReference>
<dbReference type="GO" id="GO:0005737">
    <property type="term" value="C:cytoplasm"/>
    <property type="evidence" value="ECO:0007669"/>
    <property type="project" value="UniProtKB-SubCell"/>
</dbReference>
<dbReference type="GO" id="GO:0020037">
    <property type="term" value="F:heme binding"/>
    <property type="evidence" value="ECO:0007669"/>
    <property type="project" value="UniProtKB-UniRule"/>
</dbReference>
<dbReference type="GO" id="GO:0004392">
    <property type="term" value="F:heme oxygenase (decyclizing) activity"/>
    <property type="evidence" value="ECO:0007669"/>
    <property type="project" value="UniProtKB-UniRule"/>
</dbReference>
<dbReference type="GO" id="GO:0005506">
    <property type="term" value="F:iron ion binding"/>
    <property type="evidence" value="ECO:0007669"/>
    <property type="project" value="UniProtKB-UniRule"/>
</dbReference>
<dbReference type="GO" id="GO:0042167">
    <property type="term" value="P:heme catabolic process"/>
    <property type="evidence" value="ECO:0007669"/>
    <property type="project" value="UniProtKB-UniRule"/>
</dbReference>
<dbReference type="GO" id="GO:0033212">
    <property type="term" value="P:iron import into cell"/>
    <property type="evidence" value="ECO:0007669"/>
    <property type="project" value="InterPro"/>
</dbReference>
<dbReference type="Gene3D" id="3.30.70.100">
    <property type="match status" value="1"/>
</dbReference>
<dbReference type="HAMAP" id="MF_01272">
    <property type="entry name" value="Heme_degrading_monooxygenase"/>
    <property type="match status" value="1"/>
</dbReference>
<dbReference type="InterPro" id="IPR007138">
    <property type="entry name" value="ABM_dom"/>
</dbReference>
<dbReference type="InterPro" id="IPR011008">
    <property type="entry name" value="Dimeric_a/b-barrel"/>
</dbReference>
<dbReference type="InterPro" id="IPR050404">
    <property type="entry name" value="Heme-degrading_MO"/>
</dbReference>
<dbReference type="InterPro" id="IPR023953">
    <property type="entry name" value="IsdG"/>
</dbReference>
<dbReference type="NCBIfam" id="NF009837">
    <property type="entry name" value="PRK13312.1"/>
    <property type="match status" value="1"/>
</dbReference>
<dbReference type="PANTHER" id="PTHR34474:SF4">
    <property type="entry name" value="HEME OXYGENASE (STAPHYLOBILIN-PRODUCING) 1"/>
    <property type="match status" value="1"/>
</dbReference>
<dbReference type="PANTHER" id="PTHR34474">
    <property type="entry name" value="SIGNAL TRANSDUCTION PROTEIN TRAP"/>
    <property type="match status" value="1"/>
</dbReference>
<dbReference type="Pfam" id="PF03992">
    <property type="entry name" value="ABM"/>
    <property type="match status" value="1"/>
</dbReference>
<dbReference type="SUPFAM" id="SSF54909">
    <property type="entry name" value="Dimeric alpha+beta barrel"/>
    <property type="match status" value="1"/>
</dbReference>
<dbReference type="PROSITE" id="PS51725">
    <property type="entry name" value="ABM"/>
    <property type="match status" value="1"/>
</dbReference>
<sequence>MKFMAENRLTLTKGTAKDIIERFYTRHGIETLEGFDGMFVTQTLEQEDFDEVKILTVWKSKQAFTDWLKSDVFKAAHKHVRSKNEDESSPIINNKVITYDIGYSYMK</sequence>
<feature type="chain" id="PRO_0000270095" description="Heme oxygenase (staphylobilin-producing) 1">
    <location>
        <begin position="1"/>
        <end position="107"/>
    </location>
</feature>
<feature type="domain" description="ABM" evidence="1">
    <location>
        <begin position="3"/>
        <end position="92"/>
    </location>
</feature>
<feature type="binding site" evidence="1">
    <location>
        <position position="7"/>
    </location>
    <ligand>
        <name>Fe cation</name>
        <dbReference type="ChEBI" id="CHEBI:24875"/>
    </ligand>
</feature>
<feature type="binding site" evidence="1">
    <location>
        <begin position="22"/>
        <end position="29"/>
    </location>
    <ligand>
        <name>heme</name>
        <dbReference type="ChEBI" id="CHEBI:30413"/>
    </ligand>
</feature>
<feature type="binding site" description="axial binding residue" evidence="1">
    <location>
        <position position="77"/>
    </location>
    <ligand>
        <name>heme</name>
        <dbReference type="ChEBI" id="CHEBI:30413"/>
    </ligand>
    <ligandPart>
        <name>Fe</name>
        <dbReference type="ChEBI" id="CHEBI:18248"/>
    </ligandPart>
</feature>
<feature type="site" description="Transition state stabilizer" evidence="1">
    <location>
        <position position="67"/>
    </location>
</feature>
<gene>
    <name type="primary">isdG</name>
    <name type="ordered locus">SAUSA300_1035</name>
</gene>
<evidence type="ECO:0000255" key="1">
    <source>
        <dbReference type="HAMAP-Rule" id="MF_01272"/>
    </source>
</evidence>
<protein>
    <recommendedName>
        <fullName evidence="1">Heme oxygenase (staphylobilin-producing) 1</fullName>
        <ecNumber evidence="1">1.14.99.48</ecNumber>
    </recommendedName>
    <alternativeName>
        <fullName evidence="1">Heme-degrading monooxygenase 1</fullName>
    </alternativeName>
    <alternativeName>
        <fullName evidence="1">Iron-regulated surface determinant 1</fullName>
    </alternativeName>
    <alternativeName>
        <fullName evidence="1">Iron-responsive surface determinant 1</fullName>
    </alternativeName>
</protein>